<name>LEUC_BURP6</name>
<keyword id="KW-0004">4Fe-4S</keyword>
<keyword id="KW-0028">Amino-acid biosynthesis</keyword>
<keyword id="KW-0100">Branched-chain amino acid biosynthesis</keyword>
<keyword id="KW-0408">Iron</keyword>
<keyword id="KW-0411">Iron-sulfur</keyword>
<keyword id="KW-0432">Leucine biosynthesis</keyword>
<keyword id="KW-0456">Lyase</keyword>
<keyword id="KW-0479">Metal-binding</keyword>
<proteinExistence type="inferred from homology"/>
<reference key="1">
    <citation type="journal article" date="2010" name="Genome Biol. Evol.">
        <title>Continuing evolution of Burkholderia mallei through genome reduction and large-scale rearrangements.</title>
        <authorList>
            <person name="Losada L."/>
            <person name="Ronning C.M."/>
            <person name="DeShazer D."/>
            <person name="Woods D."/>
            <person name="Fedorova N."/>
            <person name="Kim H.S."/>
            <person name="Shabalina S.A."/>
            <person name="Pearson T.R."/>
            <person name="Brinkac L."/>
            <person name="Tan P."/>
            <person name="Nandi T."/>
            <person name="Crabtree J."/>
            <person name="Badger J."/>
            <person name="Beckstrom-Sternberg S."/>
            <person name="Saqib M."/>
            <person name="Schutzer S.E."/>
            <person name="Keim P."/>
            <person name="Nierman W.C."/>
        </authorList>
    </citation>
    <scope>NUCLEOTIDE SEQUENCE [LARGE SCALE GENOMIC DNA]</scope>
    <source>
        <strain>668</strain>
    </source>
</reference>
<protein>
    <recommendedName>
        <fullName evidence="1">3-isopropylmalate dehydratase large subunit</fullName>
        <ecNumber evidence="1">4.2.1.33</ecNumber>
    </recommendedName>
    <alternativeName>
        <fullName evidence="1">Alpha-IPM isomerase</fullName>
        <shortName evidence="1">IPMI</shortName>
    </alternativeName>
    <alternativeName>
        <fullName evidence="1">Isopropylmalate isomerase</fullName>
    </alternativeName>
</protein>
<organism>
    <name type="scientific">Burkholderia pseudomallei (strain 668)</name>
    <dbReference type="NCBI Taxonomy" id="320373"/>
    <lineage>
        <taxon>Bacteria</taxon>
        <taxon>Pseudomonadati</taxon>
        <taxon>Pseudomonadota</taxon>
        <taxon>Betaproteobacteria</taxon>
        <taxon>Burkholderiales</taxon>
        <taxon>Burkholderiaceae</taxon>
        <taxon>Burkholderia</taxon>
        <taxon>pseudomallei group</taxon>
    </lineage>
</organism>
<feature type="chain" id="PRO_1000063540" description="3-isopropylmalate dehydratase large subunit">
    <location>
        <begin position="1"/>
        <end position="469"/>
    </location>
</feature>
<feature type="binding site" evidence="1">
    <location>
        <position position="347"/>
    </location>
    <ligand>
        <name>[4Fe-4S] cluster</name>
        <dbReference type="ChEBI" id="CHEBI:49883"/>
    </ligand>
</feature>
<feature type="binding site" evidence="1">
    <location>
        <position position="410"/>
    </location>
    <ligand>
        <name>[4Fe-4S] cluster</name>
        <dbReference type="ChEBI" id="CHEBI:49883"/>
    </ligand>
</feature>
<feature type="binding site" evidence="1">
    <location>
        <position position="413"/>
    </location>
    <ligand>
        <name>[4Fe-4S] cluster</name>
        <dbReference type="ChEBI" id="CHEBI:49883"/>
    </ligand>
</feature>
<evidence type="ECO:0000255" key="1">
    <source>
        <dbReference type="HAMAP-Rule" id="MF_01026"/>
    </source>
</evidence>
<sequence length="469" mass="50803">MAQTLYDKLWNSHVVHTEEDGTALLYIDRQLLHEVTSPQAFEGLKLAQRPVWRISANLAVSDHNVPTTDRSHGIADPVSKLQVDTLDANCDAYGITQFKMNDVRQGIVHIIGPEQGATLPGMTIVCGDSHTSTHGAFGALAHGIGTSEVEHVLATQTLLQKKSKNMLVKVEGQLPRGCTAKDIVLAIIGRIGTAGGTGYAIEFGGSTIRALTMEGRMTVCNMAIEAGARAGMVAVDDTTVEYLKGRPFVPTGAEWDQAVEYWKTFRSDEGAQFDRVVELDAAQIVPQVTWGTSPEMVTSIDGRVPDPEREKDPVKRDAMERALAYMALAPNTPIEAIKVDKIFIGSCTNARIEDIRAAAYVVKKLNRRVAPNVRLAMVVPGSGLVKAQAEREGLDKVFTEAGFEWREPGCSMCLAMNADRLEPGERCASTSNRNFEGRQGQGGRTHLVSPAMAAAAAIEGHFVDIRRLG</sequence>
<accession>A3NM77</accession>
<dbReference type="EC" id="4.2.1.33" evidence="1"/>
<dbReference type="EMBL" id="CP000571">
    <property type="protein sequence ID" value="ABN88240.1"/>
    <property type="molecule type" value="Genomic_DNA"/>
</dbReference>
<dbReference type="RefSeq" id="WP_004528981.1">
    <property type="nucleotide sequence ID" value="NC_009075.1"/>
</dbReference>
<dbReference type="SMR" id="A3NM77"/>
<dbReference type="GeneID" id="93063906"/>
<dbReference type="KEGG" id="bpd:BURPS668_A2454"/>
<dbReference type="HOGENOM" id="CLU_006714_3_4_4"/>
<dbReference type="UniPathway" id="UPA00048">
    <property type="reaction ID" value="UER00071"/>
</dbReference>
<dbReference type="GO" id="GO:0003861">
    <property type="term" value="F:3-isopropylmalate dehydratase activity"/>
    <property type="evidence" value="ECO:0007669"/>
    <property type="project" value="UniProtKB-UniRule"/>
</dbReference>
<dbReference type="GO" id="GO:0051539">
    <property type="term" value="F:4 iron, 4 sulfur cluster binding"/>
    <property type="evidence" value="ECO:0007669"/>
    <property type="project" value="UniProtKB-KW"/>
</dbReference>
<dbReference type="GO" id="GO:0046872">
    <property type="term" value="F:metal ion binding"/>
    <property type="evidence" value="ECO:0007669"/>
    <property type="project" value="UniProtKB-KW"/>
</dbReference>
<dbReference type="GO" id="GO:0009098">
    <property type="term" value="P:L-leucine biosynthetic process"/>
    <property type="evidence" value="ECO:0007669"/>
    <property type="project" value="UniProtKB-UniRule"/>
</dbReference>
<dbReference type="CDD" id="cd01583">
    <property type="entry name" value="IPMI"/>
    <property type="match status" value="1"/>
</dbReference>
<dbReference type="FunFam" id="3.30.499.10:FF:000007">
    <property type="entry name" value="3-isopropylmalate dehydratase large subunit"/>
    <property type="match status" value="1"/>
</dbReference>
<dbReference type="Gene3D" id="3.30.499.10">
    <property type="entry name" value="Aconitase, domain 3"/>
    <property type="match status" value="2"/>
</dbReference>
<dbReference type="HAMAP" id="MF_01026">
    <property type="entry name" value="LeuC_type1"/>
    <property type="match status" value="1"/>
</dbReference>
<dbReference type="InterPro" id="IPR004430">
    <property type="entry name" value="3-IsopropMal_deHydase_lsu"/>
</dbReference>
<dbReference type="InterPro" id="IPR015931">
    <property type="entry name" value="Acnase/IPM_dHydase_lsu_aba_1/3"/>
</dbReference>
<dbReference type="InterPro" id="IPR001030">
    <property type="entry name" value="Acoase/IPM_deHydtase_lsu_aba"/>
</dbReference>
<dbReference type="InterPro" id="IPR018136">
    <property type="entry name" value="Aconitase_4Fe-4S_BS"/>
</dbReference>
<dbReference type="InterPro" id="IPR036008">
    <property type="entry name" value="Aconitase_4Fe-4S_dom"/>
</dbReference>
<dbReference type="InterPro" id="IPR050067">
    <property type="entry name" value="IPM_dehydratase_rel_enz"/>
</dbReference>
<dbReference type="InterPro" id="IPR033941">
    <property type="entry name" value="IPMI_cat"/>
</dbReference>
<dbReference type="NCBIfam" id="TIGR00170">
    <property type="entry name" value="leuC"/>
    <property type="match status" value="1"/>
</dbReference>
<dbReference type="NCBIfam" id="NF004016">
    <property type="entry name" value="PRK05478.1"/>
    <property type="match status" value="1"/>
</dbReference>
<dbReference type="NCBIfam" id="NF009116">
    <property type="entry name" value="PRK12466.1"/>
    <property type="match status" value="1"/>
</dbReference>
<dbReference type="PANTHER" id="PTHR43822:SF9">
    <property type="entry name" value="3-ISOPROPYLMALATE DEHYDRATASE"/>
    <property type="match status" value="1"/>
</dbReference>
<dbReference type="PANTHER" id="PTHR43822">
    <property type="entry name" value="HOMOACONITASE, MITOCHONDRIAL-RELATED"/>
    <property type="match status" value="1"/>
</dbReference>
<dbReference type="Pfam" id="PF00330">
    <property type="entry name" value="Aconitase"/>
    <property type="match status" value="1"/>
</dbReference>
<dbReference type="PRINTS" id="PR00415">
    <property type="entry name" value="ACONITASE"/>
</dbReference>
<dbReference type="SUPFAM" id="SSF53732">
    <property type="entry name" value="Aconitase iron-sulfur domain"/>
    <property type="match status" value="1"/>
</dbReference>
<dbReference type="PROSITE" id="PS00450">
    <property type="entry name" value="ACONITASE_1"/>
    <property type="match status" value="1"/>
</dbReference>
<dbReference type="PROSITE" id="PS01244">
    <property type="entry name" value="ACONITASE_2"/>
    <property type="match status" value="1"/>
</dbReference>
<gene>
    <name evidence="1" type="primary">leuC</name>
    <name type="ordered locus">BURPS668_A2454</name>
</gene>
<comment type="function">
    <text evidence="1">Catalyzes the isomerization between 2-isopropylmalate and 3-isopropylmalate, via the formation of 2-isopropylmaleate.</text>
</comment>
<comment type="catalytic activity">
    <reaction evidence="1">
        <text>(2R,3S)-3-isopropylmalate = (2S)-2-isopropylmalate</text>
        <dbReference type="Rhea" id="RHEA:32287"/>
        <dbReference type="ChEBI" id="CHEBI:1178"/>
        <dbReference type="ChEBI" id="CHEBI:35121"/>
        <dbReference type="EC" id="4.2.1.33"/>
    </reaction>
</comment>
<comment type="cofactor">
    <cofactor evidence="1">
        <name>[4Fe-4S] cluster</name>
        <dbReference type="ChEBI" id="CHEBI:49883"/>
    </cofactor>
    <text evidence="1">Binds 1 [4Fe-4S] cluster per subunit.</text>
</comment>
<comment type="pathway">
    <text evidence="1">Amino-acid biosynthesis; L-leucine biosynthesis; L-leucine from 3-methyl-2-oxobutanoate: step 2/4.</text>
</comment>
<comment type="subunit">
    <text evidence="1">Heterodimer of LeuC and LeuD.</text>
</comment>
<comment type="similarity">
    <text evidence="1">Belongs to the aconitase/IPM isomerase family. LeuC type 1 subfamily.</text>
</comment>